<sequence length="1419" mass="134570">MIRLGAPQSLVLLTLLIATVLQCQGQDARKLGPKGQKGEPGDIKDIIGPKGPPGPQGPAGEQGPRGDRGDKGERGAPGPRGRDGEPGTPGNPGPPGPPGPPGPPGLGGGNFAAQMAGGFDEKAGGAQMGVMQGPMGPMGPRGPPGPAGAPGPQGFQGNPGEPGEPGVSGPIGPRGPPGPAGKPGDDGEAGKPGKAGERGLPGPQGARGFPGTPGLPGVKGHRGYPGLDGAKGEAGAPGVKGESGSPGENGSPGPMGPRGLPGERGRTGPAGAAGARGNDGQPGPAGPPGPVGPAGGPGFLGAPGAKGEAGPTGARGPEGAQGSRGEPGNPGSPGPAGASGNPGTDGIPGAKGSAGAPGIAGAPGFPGPRGPPGPQGATGPLGPKGQTGEPGIAGFKGEQGPKGETGPAGPQGAPGPAGEEGKRGARGEPGGAGPIGPPGERGAPGNRGFPGQDGLAGPKGAPGERGPSGLAGPKGANGDPGRPGEPGLPGARGLTGRPGDAGPQGKVGPSGAPGEDGRPGPPGPQGARGQPGVMGFPGPKGANGEPGKAGEKGLAGAPGLRGLPGKDGETGAAGPPGPSGPAGERGEQGAPGPSGFQGLPGPPGPPGEGGKQGDQGIPGEAGAPGLVGPRGERGFPGERGSPGAQGLQGPRGLPGTPGTDGPKGAAGPDGPPGAQGPPGLQGMPGERGAAGIAGPKGDRGDVGEKGPEGAPGKDGGRGLTGPIGPPGPAGANGEKGEVGPPGPSGSTGARGAPGERGETGPPGPAGFAGPPGADGQPGAKGDQGEAGQKGDAGAPGPQGPSGAPGPQGPTGVTGPKGARGAQGPPGATGFPGAAGRVGPPGSNGNPGPAGPPGPAGKDGPKGARGDTGAPGRAGDPGLQGPAGAPGEKGEPGDDGPSGSDGPPGPQGLAGQRGIVGLPGQRGERGFPGLPGPSGEPGKQGAPGASGDRGPPGPVGPPGLTGPAGEPGREGSPGADGPPGRDGAAGVKGDRGETGALGAPGAPGPPGSPGPAGPTGKQGDRGEAGAQGPMGPSGPAGARGIAGPQGPRGDKGEAGEPGERGLKGHRGFTGLQGLPGPPGPSGDQGTSGPAGPSGPRGPPGPVGPSGKDGSNGIPGPIGPPGPRGRSGETGPAGPPGNPGPPGPPGPPGPGIDMSAFAGLGQREKGPDPLQYMRADEADSTLRQHDVEVDATLKSLNNQIESIRSPDGSRKNPARTCQDLKLCHPEWKSGDYWIDPNQGCTLDAMKVFCNMETGESCVYPNPATVPRKNWWSSKSKEKKHIWFGETMNGGFHFSYGDGNLAPNTANVQMTFLRLLSTEGSQNITYHCKNSIAYLDEAAGNLKKALLIQGSNDVEMRAEGNSRFTYTALKDGCTKHTGKWGKTIIEYRSQKTSRLPIVDIAPMDIGGPDQEFGVDIGPVCFL</sequence>
<name>CO2A1_RAT</name>
<comment type="function">
    <text>Type II collagen is specific for cartilaginous tissues. It is essential for the normal embryonic development of the skeleton, for linear growth and for the ability of cartilage to resist compressive forces.</text>
</comment>
<comment type="subunit">
    <text>Homotrimers of alpha 1(II) chains.</text>
</comment>
<comment type="subcellular location">
    <subcellularLocation>
        <location evidence="4">Secreted</location>
        <location evidence="4">Extracellular space</location>
        <location evidence="4">Extracellular matrix</location>
    </subcellularLocation>
</comment>
<comment type="tissue specificity">
    <text evidence="6">Expressed in chondrocytes.</text>
</comment>
<comment type="domain">
    <text evidence="1">The C-terminal propeptide, also known as COLFI domain, have crucial roles in tissue growth and repair by controlling both the intracellular assembly of procollagen molecules and the extracellular assembly of collagen fibrils. It binds a calcium ion which is essential for its function (By similarity).</text>
</comment>
<comment type="PTM">
    <text evidence="6">Contains mostly 4-hydroxyproline. Prolines at the third position of the tripeptide repeating unit (G-X-P) are 4-hydroxylated in some or all of the chains.</text>
</comment>
<comment type="PTM">
    <text evidence="6">Contains 3-hydroxyproline at a few sites. This modification occurs on the first proline residue in the sequence motif Gly-Pro-Hyp, where Hyp is 4-hydroxyproline.</text>
</comment>
<comment type="PTM">
    <text evidence="7">Lysine residues at the third position of the tripeptide repeating unit (G-X-Y) are 5-hydroxylated in some or all of the chains.</text>
</comment>
<comment type="PTM">
    <text evidence="7">O-glycosylated on hydroxylated lysine residues. The O-linked glycan consists of a Glc-Gal disaccharide.</text>
</comment>
<comment type="similarity">
    <text evidence="4">Belongs to the fibrillar collagen family.</text>
</comment>
<reference key="1">
    <citation type="submission" date="1995-10" db="EMBL/GenBank/DDBJ databases">
        <title>Complete rat type II collagen cDNA sequence.</title>
        <authorList>
            <person name="Urabe K."/>
            <person name="Sarkar G."/>
            <person name="Bolander M.E."/>
        </authorList>
    </citation>
    <scope>NUCLEOTIDE SEQUENCE [MRNA]</scope>
    <source>
        <tissue>Bone</tissue>
    </source>
</reference>
<reference key="2">
    <citation type="journal article" date="1984" name="J. Biol. Chem.">
        <title>Isolation and characterization of a cDNA clone for the amino-terminal portion of the pro-alpha 1(II) chain of cartilage collagen.</title>
        <authorList>
            <person name="Kohno K."/>
            <person name="Martin G.R."/>
            <person name="Yamada Y."/>
        </authorList>
    </citation>
    <scope>NUCLEOTIDE SEQUENCE [MRNA] OF 1-122</scope>
</reference>
<reference key="3">
    <citation type="journal article" date="1985" name="J. Biol. Chem.">
        <title>Structure of the promoter of the rat type II procollagen gene.</title>
        <authorList>
            <person name="Kohno K."/>
            <person name="Sullivan M."/>
            <person name="Yamada Y."/>
        </authorList>
    </citation>
    <scope>NUCLEOTIDE SEQUENCE [GENOMIC DNA] OF 1-29</scope>
</reference>
<reference key="4">
    <citation type="journal article" date="1994" name="J. Exp. Med.">
        <title>T-cell recognition of carbohydrates on type II collagen.</title>
        <authorList>
            <person name="Michaelson E."/>
            <person name="Malmstrom V."/>
            <person name="Reis S."/>
            <person name="Engstrom A."/>
            <person name="Burkhardt H."/>
            <person name="Holmdahl R."/>
        </authorList>
    </citation>
    <scope>NUCLEOTIDE SEQUENCE [MRNA] OF 370-422</scope>
    <source>
        <strain>DA</strain>
        <tissue>Cartilage</tissue>
    </source>
</reference>
<reference key="5">
    <citation type="journal article" date="2011" name="J. Biol. Chem.">
        <title>A role for prolyl 3-hydroxylase 2 in post-translational modification of fibril-forming collagens.</title>
        <authorList>
            <person name="Fernandes R.J."/>
            <person name="Farnand A.W."/>
            <person name="Traeger G.R."/>
            <person name="Weis M.A."/>
            <person name="Eyre D.R."/>
        </authorList>
    </citation>
    <scope>HYDROXYLATION AT PRO-591; PRO-600; PRO-602; PRO-603; PRO-606; PRO-839; PRO-840; PRO-846; PRO-852; PRO-1076; PRO-1113; PRO-1118; PRO-1119; PRO-1133; PRO-1134; PRO-1137; PRO-1139; PRO-1140 PRO-1143; PRO-1145 AND PRO-1146</scope>
    <scope>TISSUE SPECIFICITY</scope>
    <scope>IDENTIFICATION BY MASS SPECTROMETRY</scope>
</reference>
<protein>
    <recommendedName>
        <fullName evidence="2">Collagen alpha-1(II) chain</fullName>
    </recommendedName>
    <alternativeName>
        <fullName evidence="2">Alpha-1 type II collagen</fullName>
    </alternativeName>
    <component>
        <recommendedName>
            <fullName evidence="2">Collagen alpha-1(II) chain</fullName>
        </recommendedName>
    </component>
    <component>
        <recommendedName>
            <fullName evidence="2">Chondrocalcin</fullName>
        </recommendedName>
    </component>
</protein>
<evidence type="ECO:0000250" key="1"/>
<evidence type="ECO:0000250" key="2">
    <source>
        <dbReference type="UniProtKB" id="P02458"/>
    </source>
</evidence>
<evidence type="ECO:0000255" key="3"/>
<evidence type="ECO:0000255" key="4">
    <source>
        <dbReference type="PROSITE-ProRule" id="PRU00793"/>
    </source>
</evidence>
<evidence type="ECO:0000256" key="5">
    <source>
        <dbReference type="SAM" id="MobiDB-lite"/>
    </source>
</evidence>
<evidence type="ECO:0000269" key="6">
    <source>
    </source>
</evidence>
<evidence type="ECO:0000305" key="7"/>
<evidence type="ECO:0000312" key="8">
    <source>
        <dbReference type="RGD" id="2375"/>
    </source>
</evidence>
<feature type="signal peptide" evidence="3">
    <location>
        <begin position="1"/>
        <end position="25"/>
    </location>
</feature>
<feature type="propeptide" id="PRO_0000005735" description="N-terminal propeptide" evidence="1">
    <location>
        <begin position="26"/>
        <end position="113"/>
    </location>
</feature>
<feature type="chain" id="PRO_0000005736" description="Collagen alpha-1(II) chain">
    <location>
        <begin position="114"/>
        <end position="1173"/>
    </location>
</feature>
<feature type="chain" id="PRO_0000043407" description="Chondrocalcin" evidence="1">
    <location>
        <begin position="1174"/>
        <end position="1419"/>
    </location>
</feature>
<feature type="domain" description="Fibrillar collagen NC1" evidence="4">
    <location>
        <begin position="1185"/>
        <end position="1419"/>
    </location>
</feature>
<feature type="region of interest" description="Disordered" evidence="5">
    <location>
        <begin position="28"/>
        <end position="1168"/>
    </location>
</feature>
<feature type="region of interest" description="Triple-helical region">
    <location>
        <begin position="133"/>
        <end position="1146"/>
    </location>
</feature>
<feature type="region of interest" description="Nonhelical region (C-terminal)">
    <location>
        <begin position="1147"/>
        <end position="1173"/>
    </location>
</feature>
<feature type="compositionally biased region" description="Basic and acidic residues" evidence="5">
    <location>
        <begin position="36"/>
        <end position="47"/>
    </location>
</feature>
<feature type="compositionally biased region" description="Basic and acidic residues" evidence="5">
    <location>
        <begin position="64"/>
        <end position="85"/>
    </location>
</feature>
<feature type="compositionally biased region" description="Pro residues" evidence="5">
    <location>
        <begin position="89"/>
        <end position="104"/>
    </location>
</feature>
<feature type="compositionally biased region" description="Low complexity" evidence="5">
    <location>
        <begin position="124"/>
        <end position="135"/>
    </location>
</feature>
<feature type="compositionally biased region" description="Pro residues" evidence="5">
    <location>
        <begin position="140"/>
        <end position="149"/>
    </location>
</feature>
<feature type="compositionally biased region" description="Low complexity" evidence="5">
    <location>
        <begin position="150"/>
        <end position="171"/>
    </location>
</feature>
<feature type="compositionally biased region" description="Basic and acidic residues" evidence="5">
    <location>
        <begin position="183"/>
        <end position="197"/>
    </location>
</feature>
<feature type="compositionally biased region" description="Low complexity" evidence="5">
    <location>
        <begin position="242"/>
        <end position="252"/>
    </location>
</feature>
<feature type="compositionally biased region" description="Low complexity" evidence="5">
    <location>
        <begin position="267"/>
        <end position="282"/>
    </location>
</feature>
<feature type="compositionally biased region" description="Gly residues" evidence="5">
    <location>
        <begin position="292"/>
        <end position="301"/>
    </location>
</feature>
<feature type="compositionally biased region" description="Low complexity" evidence="5">
    <location>
        <begin position="335"/>
        <end position="363"/>
    </location>
</feature>
<feature type="compositionally biased region" description="Pro residues" evidence="5">
    <location>
        <begin position="365"/>
        <end position="374"/>
    </location>
</feature>
<feature type="compositionally biased region" description="Low complexity" evidence="5">
    <location>
        <begin position="404"/>
        <end position="417"/>
    </location>
</feature>
<feature type="compositionally biased region" description="Low complexity" evidence="5">
    <location>
        <begin position="554"/>
        <end position="563"/>
    </location>
</feature>
<feature type="compositionally biased region" description="Low complexity" evidence="5">
    <location>
        <begin position="638"/>
        <end position="668"/>
    </location>
</feature>
<feature type="compositionally biased region" description="Basic and acidic residues" evidence="5">
    <location>
        <begin position="696"/>
        <end position="707"/>
    </location>
</feature>
<feature type="compositionally biased region" description="Low complexity" evidence="5">
    <location>
        <begin position="765"/>
        <end position="780"/>
    </location>
</feature>
<feature type="compositionally biased region" description="Low complexity" evidence="5">
    <location>
        <begin position="809"/>
        <end position="846"/>
    </location>
</feature>
<feature type="compositionally biased region" description="Pro residues" evidence="5">
    <location>
        <begin position="1001"/>
        <end position="1011"/>
    </location>
</feature>
<feature type="compositionally biased region" description="Basic and acidic residues" evidence="5">
    <location>
        <begin position="1047"/>
        <end position="1061"/>
    </location>
</feature>
<feature type="compositionally biased region" description="Low complexity" evidence="5">
    <location>
        <begin position="1080"/>
        <end position="1089"/>
    </location>
</feature>
<feature type="compositionally biased region" description="Low complexity" evidence="5">
    <location>
        <begin position="1103"/>
        <end position="1113"/>
    </location>
</feature>
<feature type="compositionally biased region" description="Pro residues" evidence="5">
    <location>
        <begin position="1131"/>
        <end position="1148"/>
    </location>
</feature>
<feature type="binding site" evidence="1">
    <location>
        <position position="1233"/>
    </location>
    <ligand>
        <name>Ca(2+)</name>
        <dbReference type="ChEBI" id="CHEBI:29108"/>
    </ligand>
</feature>
<feature type="binding site" evidence="1">
    <location>
        <position position="1235"/>
    </location>
    <ligand>
        <name>Ca(2+)</name>
        <dbReference type="ChEBI" id="CHEBI:29108"/>
    </ligand>
</feature>
<feature type="binding site" evidence="1">
    <location>
        <position position="1236"/>
    </location>
    <ligand>
        <name>Ca(2+)</name>
        <dbReference type="ChEBI" id="CHEBI:29108"/>
    </ligand>
</feature>
<feature type="binding site" evidence="1">
    <location>
        <position position="1238"/>
    </location>
    <ligand>
        <name>Ca(2+)</name>
        <dbReference type="ChEBI" id="CHEBI:29108"/>
    </ligand>
</feature>
<feature type="binding site" evidence="1">
    <location>
        <position position="1241"/>
    </location>
    <ligand>
        <name>Ca(2+)</name>
        <dbReference type="ChEBI" id="CHEBI:29108"/>
    </ligand>
</feature>
<feature type="site" description="Cleavage; by procollagen N-endopeptidase" evidence="1">
    <location>
        <begin position="113"/>
        <end position="114"/>
    </location>
</feature>
<feature type="site" description="Cleavage; by procollagen C-endopeptidase" evidence="1">
    <location>
        <begin position="1173"/>
        <end position="1174"/>
    </location>
</feature>
<feature type="modified residue" description="5-hydroxylysine" evidence="1">
    <location>
        <position position="122"/>
    </location>
</feature>
<feature type="modified residue" description="5-hydroxylysine" evidence="1">
    <location>
        <position position="219"/>
    </location>
</feature>
<feature type="modified residue" description="5-hydroxylysine" evidence="1">
    <location>
        <position position="231"/>
    </location>
</feature>
<feature type="modified residue" description="5-hydroxylysine" evidence="1">
    <location>
        <position position="240"/>
    </location>
</feature>
<feature type="modified residue" description="5-hydroxylysine" evidence="1">
    <location>
        <position position="306"/>
    </location>
</feature>
<feature type="modified residue" description="5-hydroxylysine" evidence="1">
    <location>
        <position position="540"/>
    </location>
</feature>
<feature type="modified residue" description="5-hydroxylysine" evidence="1">
    <location>
        <position position="552"/>
    </location>
</feature>
<feature type="modified residue" description="4-hydroxyproline" evidence="6">
    <location>
        <position position="591"/>
    </location>
</feature>
<feature type="modified residue" description="4-hydroxyproline" evidence="6">
    <location>
        <position position="600"/>
    </location>
</feature>
<feature type="modified residue" description="3-hydroxyproline; partial" evidence="6">
    <location>
        <position position="602"/>
    </location>
</feature>
<feature type="modified residue" description="4-hydroxyproline" evidence="6">
    <location>
        <position position="603"/>
    </location>
</feature>
<feature type="modified residue" description="4-hydroxyproline" evidence="6">
    <location>
        <position position="606"/>
    </location>
</feature>
<feature type="modified residue" description="3-hydroxyproline; partial" evidence="6">
    <location>
        <position position="839"/>
    </location>
</feature>
<feature type="modified residue" description="4-hydroxyproline" evidence="6">
    <location>
        <position position="840"/>
    </location>
</feature>
<feature type="modified residue" description="4-hydroxyproline" evidence="6">
    <location>
        <position position="846"/>
    </location>
</feature>
<feature type="modified residue" description="4-hydroxyproline" evidence="6">
    <location>
        <position position="852"/>
    </location>
</feature>
<feature type="modified residue" description="3-hydroxyproline; partial" evidence="6">
    <location>
        <position position="1076"/>
    </location>
</feature>
<feature type="modified residue" description="4-hydroxyproline" evidence="6">
    <location>
        <position position="1113"/>
    </location>
</feature>
<feature type="modified residue" description="3-hydroxyproline" evidence="6">
    <location>
        <position position="1118"/>
    </location>
</feature>
<feature type="modified residue" description="4-hydroxyproline" evidence="6">
    <location>
        <position position="1119"/>
    </location>
</feature>
<feature type="modified residue" description="3-hydroxyproline; partial" evidence="6">
    <location>
        <position position="1133"/>
    </location>
</feature>
<feature type="modified residue" description="4-hydroxyproline" evidence="6">
    <location>
        <position position="1134"/>
    </location>
</feature>
<feature type="modified residue" description="4-hydroxyproline" evidence="6">
    <location>
        <position position="1137"/>
    </location>
</feature>
<feature type="modified residue" description="3-hydroxyproline; partial" evidence="6">
    <location>
        <position position="1139"/>
    </location>
</feature>
<feature type="modified residue" description="4-hydroxyproline" evidence="6">
    <location>
        <position position="1140"/>
    </location>
</feature>
<feature type="modified residue" description="4-hydroxyproline" evidence="6">
    <location>
        <position position="1143"/>
    </location>
</feature>
<feature type="modified residue" description="3-hydroxyproline; partial" evidence="6">
    <location>
        <position position="1145"/>
    </location>
</feature>
<feature type="modified residue" description="4-hydroxyproline" evidence="6">
    <location>
        <position position="1146"/>
    </location>
</feature>
<feature type="glycosylation site" description="O-linked (Gal...) hydroxylysine" evidence="1">
    <location>
        <position position="122"/>
    </location>
</feature>
<feature type="glycosylation site" description="O-linked (Gal...) hydroxylysine" evidence="1">
    <location>
        <position position="219"/>
    </location>
</feature>
<feature type="glycosylation site" description="O-linked (Gal...) hydroxylysine" evidence="1">
    <location>
        <position position="231"/>
    </location>
</feature>
<feature type="glycosylation site" description="O-linked (Gal...) hydroxylysine" evidence="1">
    <location>
        <position position="240"/>
    </location>
</feature>
<feature type="glycosylation site" description="O-linked (Gal...) hydroxylysine" evidence="1">
    <location>
        <position position="306"/>
    </location>
</feature>
<feature type="glycosylation site" description="O-linked (Gal...) hydroxylysine" evidence="1">
    <location>
        <position position="540"/>
    </location>
</feature>
<feature type="glycosylation site" description="O-linked (Gal...) hydroxylysine" evidence="1">
    <location>
        <position position="552"/>
    </location>
</feature>
<feature type="glycosylation site" description="N-linked (GlcNAc...) asparagine" evidence="3">
    <location>
        <position position="1320"/>
    </location>
</feature>
<feature type="disulfide bond" evidence="4">
    <location>
        <begin position="1215"/>
        <end position="1247"/>
    </location>
</feature>
<feature type="disulfide bond" description="Interchain (with C-1238)" evidence="4">
    <location>
        <position position="1221"/>
    </location>
</feature>
<feature type="disulfide bond" description="Interchain (with C-1221)" evidence="4">
    <location>
        <position position="1238"/>
    </location>
</feature>
<feature type="disulfide bond" evidence="4">
    <location>
        <begin position="1255"/>
        <end position="1417"/>
    </location>
</feature>
<feature type="disulfide bond" evidence="4">
    <location>
        <begin position="1325"/>
        <end position="1370"/>
    </location>
</feature>
<feature type="sequence conflict" description="In Ref. 2; AAA40919." evidence="7" ref="2">
    <original>E</original>
    <variation>Q</variation>
    <location>
        <position position="121"/>
    </location>
</feature>
<gene>
    <name evidence="8" type="primary">Col2a1</name>
</gene>
<dbReference type="EMBL" id="L48440">
    <property type="protein sequence ID" value="AAA79780.1"/>
    <property type="molecule type" value="mRNA"/>
</dbReference>
<dbReference type="EMBL" id="K02804">
    <property type="protein sequence ID" value="AAA40919.1"/>
    <property type="molecule type" value="mRNA"/>
</dbReference>
<dbReference type="EMBL" id="M10613">
    <property type="protein sequence ID" value="AAA40920.1"/>
    <property type="molecule type" value="Genomic_DNA"/>
</dbReference>
<dbReference type="EMBL" id="X79816">
    <property type="protein sequence ID" value="CAA56213.1"/>
    <property type="molecule type" value="mRNA"/>
</dbReference>
<dbReference type="PIR" id="A05152">
    <property type="entry name" value="A05152"/>
</dbReference>
<dbReference type="PIR" id="I60384">
    <property type="entry name" value="I60384"/>
</dbReference>
<dbReference type="RefSeq" id="NP_037061.1">
    <property type="nucleotide sequence ID" value="NM_012929.1"/>
</dbReference>
<dbReference type="BioGRID" id="247447">
    <property type="interactions" value="1"/>
</dbReference>
<dbReference type="FunCoup" id="P05539">
    <property type="interactions" value="316"/>
</dbReference>
<dbReference type="IntAct" id="P05539">
    <property type="interactions" value="1"/>
</dbReference>
<dbReference type="STRING" id="10116.ENSRNOP00000071077"/>
<dbReference type="GlyCosmos" id="P05539">
    <property type="glycosylation" value="8 sites, No reported glycans"/>
</dbReference>
<dbReference type="GlyGen" id="P05539">
    <property type="glycosylation" value="12 sites"/>
</dbReference>
<dbReference type="PhosphoSitePlus" id="P05539"/>
<dbReference type="PaxDb" id="10116-ENSRNOP00000016044"/>
<dbReference type="ABCD" id="P05539">
    <property type="antibodies" value="18 sequenced antibodies"/>
</dbReference>
<dbReference type="DNASU" id="25412"/>
<dbReference type="GeneID" id="25412"/>
<dbReference type="KEGG" id="rno:25412"/>
<dbReference type="UCSC" id="RGD:2375">
    <property type="organism name" value="rat"/>
</dbReference>
<dbReference type="AGR" id="RGD:2375"/>
<dbReference type="CTD" id="1280"/>
<dbReference type="RGD" id="2375">
    <property type="gene designation" value="Col2a1"/>
</dbReference>
<dbReference type="eggNOG" id="KOG3544">
    <property type="taxonomic scope" value="Eukaryota"/>
</dbReference>
<dbReference type="InParanoid" id="P05539"/>
<dbReference type="PhylomeDB" id="P05539"/>
<dbReference type="Reactome" id="R-RNO-1442490">
    <property type="pathway name" value="Collagen degradation"/>
</dbReference>
<dbReference type="Reactome" id="R-RNO-1474244">
    <property type="pathway name" value="Extracellular matrix organization"/>
</dbReference>
<dbReference type="Reactome" id="R-RNO-1650814">
    <property type="pathway name" value="Collagen biosynthesis and modifying enzymes"/>
</dbReference>
<dbReference type="Reactome" id="R-RNO-186797">
    <property type="pathway name" value="Signaling by PDGF"/>
</dbReference>
<dbReference type="Reactome" id="R-RNO-198933">
    <property type="pathway name" value="Immunoregulatory interactions between a Lymphoid and a non-Lymphoid cell"/>
</dbReference>
<dbReference type="Reactome" id="R-RNO-2022090">
    <property type="pathway name" value="Assembly of collagen fibrils and other multimeric structures"/>
</dbReference>
<dbReference type="Reactome" id="R-RNO-216083">
    <property type="pathway name" value="Integrin cell surface interactions"/>
</dbReference>
<dbReference type="Reactome" id="R-RNO-3000171">
    <property type="pathway name" value="Non-integrin membrane-ECM interactions"/>
</dbReference>
<dbReference type="Reactome" id="R-RNO-3000178">
    <property type="pathway name" value="ECM proteoglycans"/>
</dbReference>
<dbReference type="Reactome" id="R-RNO-419037">
    <property type="pathway name" value="NCAM1 interactions"/>
</dbReference>
<dbReference type="Reactome" id="R-RNO-8874081">
    <property type="pathway name" value="MET activates PTK2 signaling"/>
</dbReference>
<dbReference type="Reactome" id="R-RNO-8948216">
    <property type="pathway name" value="Collagen chain trimerization"/>
</dbReference>
<dbReference type="PRO" id="PR:P05539"/>
<dbReference type="Proteomes" id="UP000002494">
    <property type="component" value="Unplaced"/>
</dbReference>
<dbReference type="GO" id="GO:0005604">
    <property type="term" value="C:basement membrane"/>
    <property type="evidence" value="ECO:0000266"/>
    <property type="project" value="RGD"/>
</dbReference>
<dbReference type="GO" id="GO:0005581">
    <property type="term" value="C:collagen trimer"/>
    <property type="evidence" value="ECO:0000266"/>
    <property type="project" value="RGD"/>
</dbReference>
<dbReference type="GO" id="GO:0005585">
    <property type="term" value="C:collagen type II trimer"/>
    <property type="evidence" value="ECO:0000266"/>
    <property type="project" value="RGD"/>
</dbReference>
<dbReference type="GO" id="GO:0062023">
    <property type="term" value="C:collagen-containing extracellular matrix"/>
    <property type="evidence" value="ECO:0000318"/>
    <property type="project" value="GO_Central"/>
</dbReference>
<dbReference type="GO" id="GO:0005737">
    <property type="term" value="C:cytoplasm"/>
    <property type="evidence" value="ECO:0000266"/>
    <property type="project" value="RGD"/>
</dbReference>
<dbReference type="GO" id="GO:0031012">
    <property type="term" value="C:extracellular matrix"/>
    <property type="evidence" value="ECO:0000266"/>
    <property type="project" value="RGD"/>
</dbReference>
<dbReference type="GO" id="GO:0005615">
    <property type="term" value="C:extracellular space"/>
    <property type="evidence" value="ECO:0000266"/>
    <property type="project" value="RGD"/>
</dbReference>
<dbReference type="GO" id="GO:0030020">
    <property type="term" value="F:extracellular matrix structural constituent conferring tensile strength"/>
    <property type="evidence" value="ECO:0000318"/>
    <property type="project" value="GO_Central"/>
</dbReference>
<dbReference type="GO" id="GO:0042802">
    <property type="term" value="F:identical protein binding"/>
    <property type="evidence" value="ECO:0000266"/>
    <property type="project" value="RGD"/>
</dbReference>
<dbReference type="GO" id="GO:0046872">
    <property type="term" value="F:metal ion binding"/>
    <property type="evidence" value="ECO:0007669"/>
    <property type="project" value="UniProtKB-KW"/>
</dbReference>
<dbReference type="GO" id="GO:0042289">
    <property type="term" value="F:MHC class II protein binding"/>
    <property type="evidence" value="ECO:0000266"/>
    <property type="project" value="RGD"/>
</dbReference>
<dbReference type="GO" id="GO:0048407">
    <property type="term" value="F:platelet-derived growth factor binding"/>
    <property type="evidence" value="ECO:0000266"/>
    <property type="project" value="RGD"/>
</dbReference>
<dbReference type="GO" id="GO:0042803">
    <property type="term" value="F:protein homodimerization activity"/>
    <property type="evidence" value="ECO:0000266"/>
    <property type="project" value="RGD"/>
</dbReference>
<dbReference type="GO" id="GO:0043394">
    <property type="term" value="F:proteoglycan binding"/>
    <property type="evidence" value="ECO:0000266"/>
    <property type="project" value="RGD"/>
</dbReference>
<dbReference type="GO" id="GO:0097065">
    <property type="term" value="P:anterior head development"/>
    <property type="evidence" value="ECO:0000266"/>
    <property type="project" value="RGD"/>
</dbReference>
<dbReference type="GO" id="GO:0060348">
    <property type="term" value="P:bone development"/>
    <property type="evidence" value="ECO:0000266"/>
    <property type="project" value="RGD"/>
</dbReference>
<dbReference type="GO" id="GO:0001502">
    <property type="term" value="P:cartilage condensation"/>
    <property type="evidence" value="ECO:0000266"/>
    <property type="project" value="RGD"/>
</dbReference>
<dbReference type="GO" id="GO:0051216">
    <property type="term" value="P:cartilage development"/>
    <property type="evidence" value="ECO:0000270"/>
    <property type="project" value="RGD"/>
</dbReference>
<dbReference type="GO" id="GO:0060351">
    <property type="term" value="P:cartilage development involved in endochondral bone morphogenesis"/>
    <property type="evidence" value="ECO:0000270"/>
    <property type="project" value="RGD"/>
</dbReference>
<dbReference type="GO" id="GO:0071773">
    <property type="term" value="P:cellular response to BMP stimulus"/>
    <property type="evidence" value="ECO:0000266"/>
    <property type="project" value="RGD"/>
</dbReference>
<dbReference type="GO" id="GO:1990314">
    <property type="term" value="P:cellular response to insulin-like growth factor stimulus"/>
    <property type="evidence" value="ECO:0000270"/>
    <property type="project" value="RGD"/>
</dbReference>
<dbReference type="GO" id="GO:0071260">
    <property type="term" value="P:cellular response to mechanical stimulus"/>
    <property type="evidence" value="ECO:0000270"/>
    <property type="project" value="RGD"/>
</dbReference>
<dbReference type="GO" id="GO:0071316">
    <property type="term" value="P:cellular response to nicotine"/>
    <property type="evidence" value="ECO:0000270"/>
    <property type="project" value="RGD"/>
</dbReference>
<dbReference type="GO" id="GO:0071374">
    <property type="term" value="P:cellular response to parathyroid hormone stimulus"/>
    <property type="evidence" value="ECO:0000270"/>
    <property type="project" value="RGD"/>
</dbReference>
<dbReference type="GO" id="GO:0071375">
    <property type="term" value="P:cellular response to peptide hormone stimulus"/>
    <property type="evidence" value="ECO:0000270"/>
    <property type="project" value="RGD"/>
</dbReference>
<dbReference type="GO" id="GO:0071300">
    <property type="term" value="P:cellular response to retinoic acid"/>
    <property type="evidence" value="ECO:0000270"/>
    <property type="project" value="RGD"/>
</dbReference>
<dbReference type="GO" id="GO:0071356">
    <property type="term" value="P:cellular response to tumor necrosis factor"/>
    <property type="evidence" value="ECO:0000270"/>
    <property type="project" value="RGD"/>
</dbReference>
<dbReference type="GO" id="GO:0071306">
    <property type="term" value="P:cellular response to vitamin E"/>
    <property type="evidence" value="ECO:0000270"/>
    <property type="project" value="RGD"/>
</dbReference>
<dbReference type="GO" id="GO:0007417">
    <property type="term" value="P:central nervous system development"/>
    <property type="evidence" value="ECO:0000266"/>
    <property type="project" value="RGD"/>
</dbReference>
<dbReference type="GO" id="GO:0002062">
    <property type="term" value="P:chondrocyte differentiation"/>
    <property type="evidence" value="ECO:0000270"/>
    <property type="project" value="RGD"/>
</dbReference>
<dbReference type="GO" id="GO:0030199">
    <property type="term" value="P:collagen fibril organization"/>
    <property type="evidence" value="ECO:0000266"/>
    <property type="project" value="RGD"/>
</dbReference>
<dbReference type="GO" id="GO:0060272">
    <property type="term" value="P:embryonic skeletal joint morphogenesis"/>
    <property type="evidence" value="ECO:0000266"/>
    <property type="project" value="RGD"/>
</dbReference>
<dbReference type="GO" id="GO:0001958">
    <property type="term" value="P:endochondral ossification"/>
    <property type="evidence" value="ECO:0000266"/>
    <property type="project" value="RGD"/>
</dbReference>
<dbReference type="GO" id="GO:0097192">
    <property type="term" value="P:extrinsic apoptotic signaling pathway in absence of ligand"/>
    <property type="evidence" value="ECO:0000266"/>
    <property type="project" value="RGD"/>
</dbReference>
<dbReference type="GO" id="GO:0003417">
    <property type="term" value="P:growth plate cartilage development"/>
    <property type="evidence" value="ECO:0000270"/>
    <property type="project" value="RGD"/>
</dbReference>
<dbReference type="GO" id="GO:0003007">
    <property type="term" value="P:heart morphogenesis"/>
    <property type="evidence" value="ECO:0000266"/>
    <property type="project" value="RGD"/>
</dbReference>
<dbReference type="GO" id="GO:0048839">
    <property type="term" value="P:inner ear development"/>
    <property type="evidence" value="ECO:0000266"/>
    <property type="project" value="RGD"/>
</dbReference>
<dbReference type="GO" id="GO:0042472">
    <property type="term" value="P:inner ear morphogenesis"/>
    <property type="evidence" value="ECO:0000266"/>
    <property type="project" value="RGD"/>
</dbReference>
<dbReference type="GO" id="GO:0060174">
    <property type="term" value="P:limb bud formation"/>
    <property type="evidence" value="ECO:0000266"/>
    <property type="project" value="RGD"/>
</dbReference>
<dbReference type="GO" id="GO:0035108">
    <property type="term" value="P:limb morphogenesis"/>
    <property type="evidence" value="ECO:0000266"/>
    <property type="project" value="RGD"/>
</dbReference>
<dbReference type="GO" id="GO:2001240">
    <property type="term" value="P:negative regulation of extrinsic apoptotic signaling pathway in absence of ligand"/>
    <property type="evidence" value="ECO:0000266"/>
    <property type="project" value="RGD"/>
</dbReference>
<dbReference type="GO" id="GO:0030903">
    <property type="term" value="P:notochord development"/>
    <property type="evidence" value="ECO:0000266"/>
    <property type="project" value="RGD"/>
</dbReference>
<dbReference type="GO" id="GO:0001503">
    <property type="term" value="P:ossification"/>
    <property type="evidence" value="ECO:0000266"/>
    <property type="project" value="RGD"/>
</dbReference>
<dbReference type="GO" id="GO:0071599">
    <property type="term" value="P:otic vesicle development"/>
    <property type="evidence" value="ECO:0000266"/>
    <property type="project" value="RGD"/>
</dbReference>
<dbReference type="GO" id="GO:0006029">
    <property type="term" value="P:proteoglycan metabolic process"/>
    <property type="evidence" value="ECO:0000266"/>
    <property type="project" value="RGD"/>
</dbReference>
<dbReference type="GO" id="GO:0010468">
    <property type="term" value="P:regulation of gene expression"/>
    <property type="evidence" value="ECO:0000266"/>
    <property type="project" value="RGD"/>
</dbReference>
<dbReference type="GO" id="GO:0071774">
    <property type="term" value="P:response to fibroblast growth factor"/>
    <property type="evidence" value="ECO:0000270"/>
    <property type="project" value="RGD"/>
</dbReference>
<dbReference type="GO" id="GO:0009612">
    <property type="term" value="P:response to mechanical stimulus"/>
    <property type="evidence" value="ECO:0000270"/>
    <property type="project" value="RGD"/>
</dbReference>
<dbReference type="GO" id="GO:0010165">
    <property type="term" value="P:response to X-ray"/>
    <property type="evidence" value="ECO:0000270"/>
    <property type="project" value="RGD"/>
</dbReference>
<dbReference type="GO" id="GO:0060021">
    <property type="term" value="P:roof of mouth development"/>
    <property type="evidence" value="ECO:0000266"/>
    <property type="project" value="RGD"/>
</dbReference>
<dbReference type="GO" id="GO:0007605">
    <property type="term" value="P:sensory perception of sound"/>
    <property type="evidence" value="ECO:0000266"/>
    <property type="project" value="RGD"/>
</dbReference>
<dbReference type="GO" id="GO:0001501">
    <property type="term" value="P:skeletal system development"/>
    <property type="evidence" value="ECO:0000266"/>
    <property type="project" value="RGD"/>
</dbReference>
<dbReference type="GO" id="GO:0048705">
    <property type="term" value="P:skeletal system morphogenesis"/>
    <property type="evidence" value="ECO:0000266"/>
    <property type="project" value="RGD"/>
</dbReference>
<dbReference type="GO" id="GO:0001894">
    <property type="term" value="P:tissue homeostasis"/>
    <property type="evidence" value="ECO:0000266"/>
    <property type="project" value="RGD"/>
</dbReference>
<dbReference type="GO" id="GO:0007601">
    <property type="term" value="P:visual perception"/>
    <property type="evidence" value="ECO:0000266"/>
    <property type="project" value="RGD"/>
</dbReference>
<dbReference type="FunFam" id="2.60.120.1000:FF:000001">
    <property type="entry name" value="Collagen alpha-1 type I chain"/>
    <property type="match status" value="1"/>
</dbReference>
<dbReference type="Gene3D" id="2.60.120.1000">
    <property type="match status" value="1"/>
</dbReference>
<dbReference type="InterPro" id="IPR008160">
    <property type="entry name" value="Collagen"/>
</dbReference>
<dbReference type="InterPro" id="IPR050149">
    <property type="entry name" value="Collagen_superfamily"/>
</dbReference>
<dbReference type="InterPro" id="IPR000885">
    <property type="entry name" value="Fib_collagen_C"/>
</dbReference>
<dbReference type="PANTHER" id="PTHR24023">
    <property type="entry name" value="COLLAGEN ALPHA"/>
    <property type="match status" value="1"/>
</dbReference>
<dbReference type="PANTHER" id="PTHR24023:SF1082">
    <property type="entry name" value="COLLAGEN TRIPLE HELIX REPEAT"/>
    <property type="match status" value="1"/>
</dbReference>
<dbReference type="Pfam" id="PF01410">
    <property type="entry name" value="COLFI"/>
    <property type="match status" value="1"/>
</dbReference>
<dbReference type="Pfam" id="PF01391">
    <property type="entry name" value="Collagen"/>
    <property type="match status" value="5"/>
</dbReference>
<dbReference type="SMART" id="SM00038">
    <property type="entry name" value="COLFI"/>
    <property type="match status" value="1"/>
</dbReference>
<dbReference type="PROSITE" id="PS51461">
    <property type="entry name" value="NC1_FIB"/>
    <property type="match status" value="1"/>
</dbReference>
<keyword id="KW-0106">Calcium</keyword>
<keyword id="KW-0176">Collagen</keyword>
<keyword id="KW-1015">Disulfide bond</keyword>
<keyword id="KW-0272">Extracellular matrix</keyword>
<keyword id="KW-0325">Glycoprotein</keyword>
<keyword id="KW-0379">Hydroxylation</keyword>
<keyword id="KW-0479">Metal-binding</keyword>
<keyword id="KW-1185">Reference proteome</keyword>
<keyword id="KW-0677">Repeat</keyword>
<keyword id="KW-0964">Secreted</keyword>
<keyword id="KW-0732">Signal</keyword>
<organism>
    <name type="scientific">Rattus norvegicus</name>
    <name type="common">Rat</name>
    <dbReference type="NCBI Taxonomy" id="10116"/>
    <lineage>
        <taxon>Eukaryota</taxon>
        <taxon>Metazoa</taxon>
        <taxon>Chordata</taxon>
        <taxon>Craniata</taxon>
        <taxon>Vertebrata</taxon>
        <taxon>Euteleostomi</taxon>
        <taxon>Mammalia</taxon>
        <taxon>Eutheria</taxon>
        <taxon>Euarchontoglires</taxon>
        <taxon>Glires</taxon>
        <taxon>Rodentia</taxon>
        <taxon>Myomorpha</taxon>
        <taxon>Muroidea</taxon>
        <taxon>Muridae</taxon>
        <taxon>Murinae</taxon>
        <taxon>Rattus</taxon>
    </lineage>
</organism>
<proteinExistence type="evidence at protein level"/>
<accession>P05539</accession>
<accession>Q63123</accession>
<accession>Q63565</accession>
<accession>Q78DY3</accession>